<feature type="chain" id="PRO_1000000796" description="Adenylosuccinate synthetase">
    <location>
        <begin position="1"/>
        <end position="416"/>
    </location>
</feature>
<feature type="active site" description="Proton acceptor" evidence="1">
    <location>
        <position position="14"/>
    </location>
</feature>
<feature type="active site" description="Proton donor" evidence="1">
    <location>
        <position position="42"/>
    </location>
</feature>
<feature type="binding site" evidence="1">
    <location>
        <begin position="13"/>
        <end position="19"/>
    </location>
    <ligand>
        <name>GTP</name>
        <dbReference type="ChEBI" id="CHEBI:37565"/>
    </ligand>
</feature>
<feature type="binding site" description="in other chain" evidence="1">
    <location>
        <begin position="14"/>
        <end position="17"/>
    </location>
    <ligand>
        <name>IMP</name>
        <dbReference type="ChEBI" id="CHEBI:58053"/>
        <note>ligand shared between dimeric partners</note>
    </ligand>
</feature>
<feature type="binding site" evidence="1">
    <location>
        <position position="14"/>
    </location>
    <ligand>
        <name>Mg(2+)</name>
        <dbReference type="ChEBI" id="CHEBI:18420"/>
    </ligand>
</feature>
<feature type="binding site" description="in other chain" evidence="1">
    <location>
        <begin position="39"/>
        <end position="42"/>
    </location>
    <ligand>
        <name>IMP</name>
        <dbReference type="ChEBI" id="CHEBI:58053"/>
        <note>ligand shared between dimeric partners</note>
    </ligand>
</feature>
<feature type="binding site" evidence="1">
    <location>
        <begin position="41"/>
        <end position="43"/>
    </location>
    <ligand>
        <name>GTP</name>
        <dbReference type="ChEBI" id="CHEBI:37565"/>
    </ligand>
</feature>
<feature type="binding site" evidence="1">
    <location>
        <position position="41"/>
    </location>
    <ligand>
        <name>Mg(2+)</name>
        <dbReference type="ChEBI" id="CHEBI:18420"/>
    </ligand>
</feature>
<feature type="binding site" description="in other chain" evidence="1">
    <location>
        <position position="126"/>
    </location>
    <ligand>
        <name>IMP</name>
        <dbReference type="ChEBI" id="CHEBI:58053"/>
        <note>ligand shared between dimeric partners</note>
    </ligand>
</feature>
<feature type="binding site" evidence="1">
    <location>
        <position position="140"/>
    </location>
    <ligand>
        <name>IMP</name>
        <dbReference type="ChEBI" id="CHEBI:58053"/>
        <note>ligand shared between dimeric partners</note>
    </ligand>
</feature>
<feature type="binding site" description="in other chain" evidence="1">
    <location>
        <position position="220"/>
    </location>
    <ligand>
        <name>IMP</name>
        <dbReference type="ChEBI" id="CHEBI:58053"/>
        <note>ligand shared between dimeric partners</note>
    </ligand>
</feature>
<feature type="binding site" description="in other chain" evidence="1">
    <location>
        <position position="235"/>
    </location>
    <ligand>
        <name>IMP</name>
        <dbReference type="ChEBI" id="CHEBI:58053"/>
        <note>ligand shared between dimeric partners</note>
    </ligand>
</feature>
<feature type="binding site" evidence="1">
    <location>
        <begin position="295"/>
        <end position="301"/>
    </location>
    <ligand>
        <name>substrate</name>
    </ligand>
</feature>
<feature type="binding site" description="in other chain" evidence="1">
    <location>
        <position position="299"/>
    </location>
    <ligand>
        <name>IMP</name>
        <dbReference type="ChEBI" id="CHEBI:58053"/>
        <note>ligand shared between dimeric partners</note>
    </ligand>
</feature>
<feature type="binding site" evidence="1">
    <location>
        <position position="301"/>
    </location>
    <ligand>
        <name>GTP</name>
        <dbReference type="ChEBI" id="CHEBI:37565"/>
    </ligand>
</feature>
<feature type="binding site" evidence="1">
    <location>
        <begin position="327"/>
        <end position="329"/>
    </location>
    <ligand>
        <name>GTP</name>
        <dbReference type="ChEBI" id="CHEBI:37565"/>
    </ligand>
</feature>
<feature type="binding site" evidence="1">
    <location>
        <begin position="405"/>
        <end position="407"/>
    </location>
    <ligand>
        <name>GTP</name>
        <dbReference type="ChEBI" id="CHEBI:37565"/>
    </ligand>
</feature>
<organism>
    <name type="scientific">Campylobacter hominis (strain ATCC BAA-381 / DSM 21671 / CCUG 45161 / LMG 19568 / NCTC 13146 / CH001A)</name>
    <dbReference type="NCBI Taxonomy" id="360107"/>
    <lineage>
        <taxon>Bacteria</taxon>
        <taxon>Pseudomonadati</taxon>
        <taxon>Campylobacterota</taxon>
        <taxon>Epsilonproteobacteria</taxon>
        <taxon>Campylobacterales</taxon>
        <taxon>Campylobacteraceae</taxon>
        <taxon>Campylobacter</taxon>
    </lineage>
</organism>
<keyword id="KW-0963">Cytoplasm</keyword>
<keyword id="KW-0342">GTP-binding</keyword>
<keyword id="KW-0436">Ligase</keyword>
<keyword id="KW-0460">Magnesium</keyword>
<keyword id="KW-0479">Metal-binding</keyword>
<keyword id="KW-0547">Nucleotide-binding</keyword>
<keyword id="KW-0658">Purine biosynthesis</keyword>
<keyword id="KW-1185">Reference proteome</keyword>
<evidence type="ECO:0000255" key="1">
    <source>
        <dbReference type="HAMAP-Rule" id="MF_00011"/>
    </source>
</evidence>
<accession>A7I328</accession>
<proteinExistence type="inferred from homology"/>
<gene>
    <name evidence="1" type="primary">purA</name>
    <name type="ordered locus">CHAB381_1370</name>
</gene>
<name>PURA_CAMHC</name>
<reference key="1">
    <citation type="submission" date="2007-07" db="EMBL/GenBank/DDBJ databases">
        <title>Complete genome sequence of Campylobacter hominis ATCC BAA-381, a commensal isolated from the human gastrointestinal tract.</title>
        <authorList>
            <person name="Fouts D.E."/>
            <person name="Mongodin E.F."/>
            <person name="Puiu D."/>
            <person name="Sebastian Y."/>
            <person name="Miller W.G."/>
            <person name="Mandrell R.E."/>
            <person name="Nelson K.E."/>
        </authorList>
    </citation>
    <scope>NUCLEOTIDE SEQUENCE [LARGE SCALE GENOMIC DNA]</scope>
    <source>
        <strain>ATCC BAA-381 / DSM 21671 / CCUG 45161 / LMG 19568 / NCTC 13146 / CH001A</strain>
    </source>
</reference>
<sequence length="416" mass="46078">MSKADLIIGSQWGDEGKGKIVDMLCANYDYVCRSGGGHNAGHTIWVDGVRYAMHLVPSGILHENIINIIGNGVVVNPDVLIAEMAQFKNLKGRFFISEKAHLNLEHHSLIDQAKERAKGDKAIGTTGKGIGPAYADKVNRTGHRVGELLNPEKLCENLMKEFDENAKFYDALNIKIPEKIAVFNELKRFKEFLAPYIANTTEMLWKALDENKKVLVEGAQGSLLDIDHGTYPYVTSSNTVASGACTGLGLAPKDIGEVIGIVKAYTTRVGNGAFPSEANDEWGEKMCQIGKEFGTTTGRKRRCGWFDAVCVKYSARLSGIDKFALMKLDVLDGFEKVKICTAYKLNGEIIDYFPCNLESVEPVYEEMDGWDSIKGVKKFSDLPENAQKYIKRIEELTNMRAGFISTSPERDDTIIL</sequence>
<comment type="function">
    <text evidence="1">Plays an important role in the de novo pathway of purine nucleotide biosynthesis. Catalyzes the first committed step in the biosynthesis of AMP from IMP.</text>
</comment>
<comment type="catalytic activity">
    <reaction evidence="1">
        <text>IMP + L-aspartate + GTP = N(6)-(1,2-dicarboxyethyl)-AMP + GDP + phosphate + 2 H(+)</text>
        <dbReference type="Rhea" id="RHEA:15753"/>
        <dbReference type="ChEBI" id="CHEBI:15378"/>
        <dbReference type="ChEBI" id="CHEBI:29991"/>
        <dbReference type="ChEBI" id="CHEBI:37565"/>
        <dbReference type="ChEBI" id="CHEBI:43474"/>
        <dbReference type="ChEBI" id="CHEBI:57567"/>
        <dbReference type="ChEBI" id="CHEBI:58053"/>
        <dbReference type="ChEBI" id="CHEBI:58189"/>
        <dbReference type="EC" id="6.3.4.4"/>
    </reaction>
</comment>
<comment type="cofactor">
    <cofactor evidence="1">
        <name>Mg(2+)</name>
        <dbReference type="ChEBI" id="CHEBI:18420"/>
    </cofactor>
    <text evidence="1">Binds 1 Mg(2+) ion per subunit.</text>
</comment>
<comment type="pathway">
    <text evidence="1">Purine metabolism; AMP biosynthesis via de novo pathway; AMP from IMP: step 1/2.</text>
</comment>
<comment type="subunit">
    <text evidence="1">Homodimer.</text>
</comment>
<comment type="subcellular location">
    <subcellularLocation>
        <location evidence="1">Cytoplasm</location>
    </subcellularLocation>
</comment>
<comment type="similarity">
    <text evidence="1">Belongs to the adenylosuccinate synthetase family.</text>
</comment>
<dbReference type="EC" id="6.3.4.4" evidence="1"/>
<dbReference type="EMBL" id="CP000776">
    <property type="protein sequence ID" value="ABS51635.1"/>
    <property type="molecule type" value="Genomic_DNA"/>
</dbReference>
<dbReference type="RefSeq" id="WP_012109222.1">
    <property type="nucleotide sequence ID" value="NC_009714.1"/>
</dbReference>
<dbReference type="SMR" id="A7I328"/>
<dbReference type="STRING" id="360107.CHAB381_1370"/>
<dbReference type="KEGG" id="cha:CHAB381_1370"/>
<dbReference type="eggNOG" id="COG0104">
    <property type="taxonomic scope" value="Bacteria"/>
</dbReference>
<dbReference type="HOGENOM" id="CLU_029848_0_0_7"/>
<dbReference type="OrthoDB" id="9807553at2"/>
<dbReference type="UniPathway" id="UPA00075">
    <property type="reaction ID" value="UER00335"/>
</dbReference>
<dbReference type="Proteomes" id="UP000002407">
    <property type="component" value="Chromosome"/>
</dbReference>
<dbReference type="GO" id="GO:0005737">
    <property type="term" value="C:cytoplasm"/>
    <property type="evidence" value="ECO:0007669"/>
    <property type="project" value="UniProtKB-SubCell"/>
</dbReference>
<dbReference type="GO" id="GO:0004019">
    <property type="term" value="F:adenylosuccinate synthase activity"/>
    <property type="evidence" value="ECO:0007669"/>
    <property type="project" value="UniProtKB-UniRule"/>
</dbReference>
<dbReference type="GO" id="GO:0005525">
    <property type="term" value="F:GTP binding"/>
    <property type="evidence" value="ECO:0007669"/>
    <property type="project" value="UniProtKB-UniRule"/>
</dbReference>
<dbReference type="GO" id="GO:0000287">
    <property type="term" value="F:magnesium ion binding"/>
    <property type="evidence" value="ECO:0007669"/>
    <property type="project" value="UniProtKB-UniRule"/>
</dbReference>
<dbReference type="GO" id="GO:0044208">
    <property type="term" value="P:'de novo' AMP biosynthetic process"/>
    <property type="evidence" value="ECO:0007669"/>
    <property type="project" value="UniProtKB-UniRule"/>
</dbReference>
<dbReference type="GO" id="GO:0046040">
    <property type="term" value="P:IMP metabolic process"/>
    <property type="evidence" value="ECO:0007669"/>
    <property type="project" value="TreeGrafter"/>
</dbReference>
<dbReference type="CDD" id="cd03108">
    <property type="entry name" value="AdSS"/>
    <property type="match status" value="1"/>
</dbReference>
<dbReference type="FunFam" id="1.10.300.10:FF:000001">
    <property type="entry name" value="Adenylosuccinate synthetase"/>
    <property type="match status" value="1"/>
</dbReference>
<dbReference type="FunFam" id="3.90.170.10:FF:000001">
    <property type="entry name" value="Adenylosuccinate synthetase"/>
    <property type="match status" value="1"/>
</dbReference>
<dbReference type="Gene3D" id="3.40.440.10">
    <property type="entry name" value="Adenylosuccinate Synthetase, subunit A, domain 1"/>
    <property type="match status" value="1"/>
</dbReference>
<dbReference type="Gene3D" id="1.10.300.10">
    <property type="entry name" value="Adenylosuccinate Synthetase, subunit A, domain 2"/>
    <property type="match status" value="1"/>
</dbReference>
<dbReference type="Gene3D" id="3.90.170.10">
    <property type="entry name" value="Adenylosuccinate Synthetase, subunit A, domain 3"/>
    <property type="match status" value="1"/>
</dbReference>
<dbReference type="HAMAP" id="MF_00011">
    <property type="entry name" value="Adenylosucc_synth"/>
    <property type="match status" value="1"/>
</dbReference>
<dbReference type="InterPro" id="IPR018220">
    <property type="entry name" value="Adenylosuccin_syn_GTP-bd"/>
</dbReference>
<dbReference type="InterPro" id="IPR033128">
    <property type="entry name" value="Adenylosuccin_syn_Lys_AS"/>
</dbReference>
<dbReference type="InterPro" id="IPR042109">
    <property type="entry name" value="Adenylosuccinate_synth_dom1"/>
</dbReference>
<dbReference type="InterPro" id="IPR042110">
    <property type="entry name" value="Adenylosuccinate_synth_dom2"/>
</dbReference>
<dbReference type="InterPro" id="IPR042111">
    <property type="entry name" value="Adenylosuccinate_synth_dom3"/>
</dbReference>
<dbReference type="InterPro" id="IPR001114">
    <property type="entry name" value="Adenylosuccinate_synthetase"/>
</dbReference>
<dbReference type="InterPro" id="IPR027417">
    <property type="entry name" value="P-loop_NTPase"/>
</dbReference>
<dbReference type="NCBIfam" id="NF002223">
    <property type="entry name" value="PRK01117.1"/>
    <property type="match status" value="1"/>
</dbReference>
<dbReference type="NCBIfam" id="TIGR00184">
    <property type="entry name" value="purA"/>
    <property type="match status" value="1"/>
</dbReference>
<dbReference type="PANTHER" id="PTHR11846">
    <property type="entry name" value="ADENYLOSUCCINATE SYNTHETASE"/>
    <property type="match status" value="1"/>
</dbReference>
<dbReference type="PANTHER" id="PTHR11846:SF0">
    <property type="entry name" value="ADENYLOSUCCINATE SYNTHETASE"/>
    <property type="match status" value="1"/>
</dbReference>
<dbReference type="Pfam" id="PF00709">
    <property type="entry name" value="Adenylsucc_synt"/>
    <property type="match status" value="1"/>
</dbReference>
<dbReference type="SMART" id="SM00788">
    <property type="entry name" value="Adenylsucc_synt"/>
    <property type="match status" value="1"/>
</dbReference>
<dbReference type="SUPFAM" id="SSF52540">
    <property type="entry name" value="P-loop containing nucleoside triphosphate hydrolases"/>
    <property type="match status" value="1"/>
</dbReference>
<dbReference type="PROSITE" id="PS01266">
    <property type="entry name" value="ADENYLOSUCCIN_SYN_1"/>
    <property type="match status" value="1"/>
</dbReference>
<dbReference type="PROSITE" id="PS00513">
    <property type="entry name" value="ADENYLOSUCCIN_SYN_2"/>
    <property type="match status" value="1"/>
</dbReference>
<protein>
    <recommendedName>
        <fullName evidence="1">Adenylosuccinate synthetase</fullName>
        <shortName evidence="1">AMPSase</shortName>
        <shortName evidence="1">AdSS</shortName>
        <ecNumber evidence="1">6.3.4.4</ecNumber>
    </recommendedName>
    <alternativeName>
        <fullName evidence="1">IMP--aspartate ligase</fullName>
    </alternativeName>
</protein>